<reference key="1">
    <citation type="journal article" date="2002" name="Nature">
        <title>The genome sequence of Schizosaccharomyces pombe.</title>
        <authorList>
            <person name="Wood V."/>
            <person name="Gwilliam R."/>
            <person name="Rajandream M.A."/>
            <person name="Lyne M.H."/>
            <person name="Lyne R."/>
            <person name="Stewart A."/>
            <person name="Sgouros J.G."/>
            <person name="Peat N."/>
            <person name="Hayles J."/>
            <person name="Baker S.G."/>
            <person name="Basham D."/>
            <person name="Bowman S."/>
            <person name="Brooks K."/>
            <person name="Brown D."/>
            <person name="Brown S."/>
            <person name="Chillingworth T."/>
            <person name="Churcher C.M."/>
            <person name="Collins M."/>
            <person name="Connor R."/>
            <person name="Cronin A."/>
            <person name="Davis P."/>
            <person name="Feltwell T."/>
            <person name="Fraser A."/>
            <person name="Gentles S."/>
            <person name="Goble A."/>
            <person name="Hamlin N."/>
            <person name="Harris D.E."/>
            <person name="Hidalgo J."/>
            <person name="Hodgson G."/>
            <person name="Holroyd S."/>
            <person name="Hornsby T."/>
            <person name="Howarth S."/>
            <person name="Huckle E.J."/>
            <person name="Hunt S."/>
            <person name="Jagels K."/>
            <person name="James K.D."/>
            <person name="Jones L."/>
            <person name="Jones M."/>
            <person name="Leather S."/>
            <person name="McDonald S."/>
            <person name="McLean J."/>
            <person name="Mooney P."/>
            <person name="Moule S."/>
            <person name="Mungall K.L."/>
            <person name="Murphy L.D."/>
            <person name="Niblett D."/>
            <person name="Odell C."/>
            <person name="Oliver K."/>
            <person name="O'Neil S."/>
            <person name="Pearson D."/>
            <person name="Quail M.A."/>
            <person name="Rabbinowitsch E."/>
            <person name="Rutherford K.M."/>
            <person name="Rutter S."/>
            <person name="Saunders D."/>
            <person name="Seeger K."/>
            <person name="Sharp S."/>
            <person name="Skelton J."/>
            <person name="Simmonds M.N."/>
            <person name="Squares R."/>
            <person name="Squares S."/>
            <person name="Stevens K."/>
            <person name="Taylor K."/>
            <person name="Taylor R.G."/>
            <person name="Tivey A."/>
            <person name="Walsh S.V."/>
            <person name="Warren T."/>
            <person name="Whitehead S."/>
            <person name="Woodward J.R."/>
            <person name="Volckaert G."/>
            <person name="Aert R."/>
            <person name="Robben J."/>
            <person name="Grymonprez B."/>
            <person name="Weltjens I."/>
            <person name="Vanstreels E."/>
            <person name="Rieger M."/>
            <person name="Schaefer M."/>
            <person name="Mueller-Auer S."/>
            <person name="Gabel C."/>
            <person name="Fuchs M."/>
            <person name="Duesterhoeft A."/>
            <person name="Fritzc C."/>
            <person name="Holzer E."/>
            <person name="Moestl D."/>
            <person name="Hilbert H."/>
            <person name="Borzym K."/>
            <person name="Langer I."/>
            <person name="Beck A."/>
            <person name="Lehrach H."/>
            <person name="Reinhardt R."/>
            <person name="Pohl T.M."/>
            <person name="Eger P."/>
            <person name="Zimmermann W."/>
            <person name="Wedler H."/>
            <person name="Wambutt R."/>
            <person name="Purnelle B."/>
            <person name="Goffeau A."/>
            <person name="Cadieu E."/>
            <person name="Dreano S."/>
            <person name="Gloux S."/>
            <person name="Lelaure V."/>
            <person name="Mottier S."/>
            <person name="Galibert F."/>
            <person name="Aves S.J."/>
            <person name="Xiang Z."/>
            <person name="Hunt C."/>
            <person name="Moore K."/>
            <person name="Hurst S.M."/>
            <person name="Lucas M."/>
            <person name="Rochet M."/>
            <person name="Gaillardin C."/>
            <person name="Tallada V.A."/>
            <person name="Garzon A."/>
            <person name="Thode G."/>
            <person name="Daga R.R."/>
            <person name="Cruzado L."/>
            <person name="Jimenez J."/>
            <person name="Sanchez M."/>
            <person name="del Rey F."/>
            <person name="Benito J."/>
            <person name="Dominguez A."/>
            <person name="Revuelta J.L."/>
            <person name="Moreno S."/>
            <person name="Armstrong J."/>
            <person name="Forsburg S.L."/>
            <person name="Cerutti L."/>
            <person name="Lowe T."/>
            <person name="McCombie W.R."/>
            <person name="Paulsen I."/>
            <person name="Potashkin J."/>
            <person name="Shpakovski G.V."/>
            <person name="Ussery D."/>
            <person name="Barrell B.G."/>
            <person name="Nurse P."/>
        </authorList>
    </citation>
    <scope>NUCLEOTIDE SEQUENCE [LARGE SCALE GENOMIC DNA]</scope>
    <source>
        <strain>972 / ATCC 24843</strain>
    </source>
</reference>
<reference key="2">
    <citation type="journal article" date="2008" name="J. Proteome Res.">
        <title>Phosphoproteome analysis of fission yeast.</title>
        <authorList>
            <person name="Wilson-Grady J.T."/>
            <person name="Villen J."/>
            <person name="Gygi S.P."/>
        </authorList>
    </citation>
    <scope>PHOSPHORYLATION [LARGE SCALE ANALYSIS] AT SER-21</scope>
    <scope>IDENTIFICATION BY MASS SPECTROMETRY</scope>
</reference>
<protein>
    <recommendedName>
        <fullName>Uncharacterized membrane protein C622.01c</fullName>
    </recommendedName>
</protein>
<sequence length="149" mass="17107">MTVDNVFIHAVPREQIRRRYSYFEAFEKNCHIQGILSKRALYMLIPCFMEFAVGSIVYSFGVPGWVLGMNTVLAAGFLVMFLFLVWPCFQLVDERQIEEPGEDEMALNAGGYYPYAEEVPPPSYPSLEEENEGNEEIEESEEMNTLLSK</sequence>
<accession>O94591</accession>
<proteinExistence type="evidence at protein level"/>
<keyword id="KW-0472">Membrane</keyword>
<keyword id="KW-0597">Phosphoprotein</keyword>
<keyword id="KW-1185">Reference proteome</keyword>
<keyword id="KW-0812">Transmembrane</keyword>
<keyword id="KW-1133">Transmembrane helix</keyword>
<evidence type="ECO:0000255" key="1"/>
<evidence type="ECO:0000256" key="2">
    <source>
        <dbReference type="SAM" id="MobiDB-lite"/>
    </source>
</evidence>
<evidence type="ECO:0000269" key="3">
    <source>
    </source>
</evidence>
<evidence type="ECO:0000305" key="4"/>
<dbReference type="EMBL" id="CU329672">
    <property type="protein sequence ID" value="CAA21857.1"/>
    <property type="molecule type" value="Genomic_DNA"/>
</dbReference>
<dbReference type="PIR" id="T41481">
    <property type="entry name" value="T41481"/>
</dbReference>
<dbReference type="RefSeq" id="NP_588173.1">
    <property type="nucleotide sequence ID" value="NM_001023163.2"/>
</dbReference>
<dbReference type="BioGRID" id="276095">
    <property type="interactions" value="6"/>
</dbReference>
<dbReference type="iPTMnet" id="O94591"/>
<dbReference type="PaxDb" id="4896-SPCC622.01c.1"/>
<dbReference type="EnsemblFungi" id="SPCC622.01c.1">
    <property type="protein sequence ID" value="SPCC622.01c.1:pep"/>
    <property type="gene ID" value="SPCC622.01c"/>
</dbReference>
<dbReference type="KEGG" id="spo:2539533"/>
<dbReference type="PomBase" id="SPCC622.01c"/>
<dbReference type="VEuPathDB" id="FungiDB:SPCC622.01c"/>
<dbReference type="HOGENOM" id="CLU_1750751_0_0_1"/>
<dbReference type="InParanoid" id="O94591"/>
<dbReference type="PRO" id="PR:O94591"/>
<dbReference type="Proteomes" id="UP000002485">
    <property type="component" value="Chromosome III"/>
</dbReference>
<dbReference type="GO" id="GO:0016020">
    <property type="term" value="C:membrane"/>
    <property type="evidence" value="ECO:0007669"/>
    <property type="project" value="UniProtKB-SubCell"/>
</dbReference>
<organism>
    <name type="scientific">Schizosaccharomyces pombe (strain 972 / ATCC 24843)</name>
    <name type="common">Fission yeast</name>
    <dbReference type="NCBI Taxonomy" id="284812"/>
    <lineage>
        <taxon>Eukaryota</taxon>
        <taxon>Fungi</taxon>
        <taxon>Dikarya</taxon>
        <taxon>Ascomycota</taxon>
        <taxon>Taphrinomycotina</taxon>
        <taxon>Schizosaccharomycetes</taxon>
        <taxon>Schizosaccharomycetales</taxon>
        <taxon>Schizosaccharomycetaceae</taxon>
        <taxon>Schizosaccharomyces</taxon>
    </lineage>
</organism>
<feature type="chain" id="PRO_0000304003" description="Uncharacterized membrane protein C622.01c">
    <location>
        <begin position="1"/>
        <end position="149"/>
    </location>
</feature>
<feature type="transmembrane region" description="Helical" evidence="1">
    <location>
        <begin position="48"/>
        <end position="68"/>
    </location>
</feature>
<feature type="transmembrane region" description="Helical" evidence="1">
    <location>
        <begin position="72"/>
        <end position="92"/>
    </location>
</feature>
<feature type="region of interest" description="Disordered" evidence="2">
    <location>
        <begin position="116"/>
        <end position="149"/>
    </location>
</feature>
<feature type="compositionally biased region" description="Acidic residues" evidence="2">
    <location>
        <begin position="127"/>
        <end position="142"/>
    </location>
</feature>
<feature type="modified residue" description="Phosphoserine" evidence="3">
    <location>
        <position position="21"/>
    </location>
</feature>
<comment type="subcellular location">
    <subcellularLocation>
        <location evidence="4">Membrane</location>
        <topology evidence="4">Multi-pass membrane protein</topology>
    </subcellularLocation>
</comment>
<name>YC81_SCHPO</name>
<gene>
    <name type="ORF">SPCC622.01c</name>
</gene>